<name>RL34_SACS2</name>
<comment type="similarity">
    <text evidence="1">Belongs to the eukaryotic ribosomal protein eL34 family.</text>
</comment>
<dbReference type="EMBL" id="AE006641">
    <property type="protein sequence ID" value="AAK40993.1"/>
    <property type="molecule type" value="Genomic_DNA"/>
</dbReference>
<dbReference type="PIR" id="B90217">
    <property type="entry name" value="B90217"/>
</dbReference>
<dbReference type="RefSeq" id="WP_009991243.1">
    <property type="nucleotide sequence ID" value="NC_002754.1"/>
</dbReference>
<dbReference type="SMR" id="Q97ZQ6"/>
<dbReference type="FunCoup" id="Q97ZQ6">
    <property type="interactions" value="64"/>
</dbReference>
<dbReference type="STRING" id="273057.SSO6374"/>
<dbReference type="PaxDb" id="273057-SSO6374"/>
<dbReference type="EnsemblBacteria" id="AAK40993">
    <property type="protein sequence ID" value="AAK40993"/>
    <property type="gene ID" value="SSO6374"/>
</dbReference>
<dbReference type="KEGG" id="sso:SSO6374"/>
<dbReference type="PATRIC" id="fig|273057.12.peg.693"/>
<dbReference type="eggNOG" id="arCOG04168">
    <property type="taxonomic scope" value="Archaea"/>
</dbReference>
<dbReference type="HOGENOM" id="CLU_118652_2_0_2"/>
<dbReference type="InParanoid" id="Q97ZQ6"/>
<dbReference type="PhylomeDB" id="Q97ZQ6"/>
<dbReference type="Proteomes" id="UP000001974">
    <property type="component" value="Chromosome"/>
</dbReference>
<dbReference type="GO" id="GO:1990904">
    <property type="term" value="C:ribonucleoprotein complex"/>
    <property type="evidence" value="ECO:0007669"/>
    <property type="project" value="UniProtKB-KW"/>
</dbReference>
<dbReference type="GO" id="GO:0005840">
    <property type="term" value="C:ribosome"/>
    <property type="evidence" value="ECO:0007669"/>
    <property type="project" value="UniProtKB-KW"/>
</dbReference>
<dbReference type="GO" id="GO:0003735">
    <property type="term" value="F:structural constituent of ribosome"/>
    <property type="evidence" value="ECO:0007669"/>
    <property type="project" value="InterPro"/>
</dbReference>
<dbReference type="GO" id="GO:0006412">
    <property type="term" value="P:translation"/>
    <property type="evidence" value="ECO:0007669"/>
    <property type="project" value="UniProtKB-UniRule"/>
</dbReference>
<dbReference type="Gene3D" id="6.20.340.10">
    <property type="match status" value="1"/>
</dbReference>
<dbReference type="HAMAP" id="MF_00349">
    <property type="entry name" value="Ribosomal_eL34"/>
    <property type="match status" value="1"/>
</dbReference>
<dbReference type="InterPro" id="IPR008195">
    <property type="entry name" value="Ribosomal_eL34"/>
</dbReference>
<dbReference type="InterPro" id="IPR038562">
    <property type="entry name" value="Ribosomal_eL34_C_sf"/>
</dbReference>
<dbReference type="InterPro" id="IPR018065">
    <property type="entry name" value="Ribosomal_eL34_CS"/>
</dbReference>
<dbReference type="InterPro" id="IPR047868">
    <property type="entry name" value="Ribosomal_L34e_arc-type"/>
</dbReference>
<dbReference type="NCBIfam" id="NF003143">
    <property type="entry name" value="PRK04059.1"/>
    <property type="match status" value="1"/>
</dbReference>
<dbReference type="Pfam" id="PF01199">
    <property type="entry name" value="Ribosomal_L34e"/>
    <property type="match status" value="1"/>
</dbReference>
<dbReference type="PRINTS" id="PR01250">
    <property type="entry name" value="RIBOSOMALL34"/>
</dbReference>
<dbReference type="PROSITE" id="PS01145">
    <property type="entry name" value="RIBOSOMAL_L34E"/>
    <property type="match status" value="1"/>
</dbReference>
<keyword id="KW-1185">Reference proteome</keyword>
<keyword id="KW-0687">Ribonucleoprotein</keyword>
<keyword id="KW-0689">Ribosomal protein</keyword>
<sequence length="88" mass="10196">MPRPALRSRSLRRVYVKLPSGKTVIHYERKRNDIAICAICKKPLHGVKTNFLHKYSKSEKRPERPFGGYLCSSCLTQLIKATVRQQLQ</sequence>
<organism>
    <name type="scientific">Saccharolobus solfataricus (strain ATCC 35092 / DSM 1617 / JCM 11322 / P2)</name>
    <name type="common">Sulfolobus solfataricus</name>
    <dbReference type="NCBI Taxonomy" id="273057"/>
    <lineage>
        <taxon>Archaea</taxon>
        <taxon>Thermoproteota</taxon>
        <taxon>Thermoprotei</taxon>
        <taxon>Sulfolobales</taxon>
        <taxon>Sulfolobaceae</taxon>
        <taxon>Saccharolobus</taxon>
    </lineage>
</organism>
<gene>
    <name evidence="1" type="primary">rpl34e</name>
    <name type="ordered locus">SSO6374</name>
</gene>
<evidence type="ECO:0000255" key="1">
    <source>
        <dbReference type="HAMAP-Rule" id="MF_00349"/>
    </source>
</evidence>
<evidence type="ECO:0000305" key="2"/>
<accession>Q97ZQ6</accession>
<proteinExistence type="inferred from homology"/>
<protein>
    <recommendedName>
        <fullName evidence="1">Large ribosomal subunit protein eL34</fullName>
    </recommendedName>
    <alternativeName>
        <fullName evidence="2">50S ribosomal protein L34e</fullName>
    </alternativeName>
</protein>
<reference key="1">
    <citation type="journal article" date="2001" name="Proc. Natl. Acad. Sci. U.S.A.">
        <title>The complete genome of the crenarchaeon Sulfolobus solfataricus P2.</title>
        <authorList>
            <person name="She Q."/>
            <person name="Singh R.K."/>
            <person name="Confalonieri F."/>
            <person name="Zivanovic Y."/>
            <person name="Allard G."/>
            <person name="Awayez M.J."/>
            <person name="Chan-Weiher C.C.-Y."/>
            <person name="Clausen I.G."/>
            <person name="Curtis B.A."/>
            <person name="De Moors A."/>
            <person name="Erauso G."/>
            <person name="Fletcher C."/>
            <person name="Gordon P.M.K."/>
            <person name="Heikamp-de Jong I."/>
            <person name="Jeffries A.C."/>
            <person name="Kozera C.J."/>
            <person name="Medina N."/>
            <person name="Peng X."/>
            <person name="Thi-Ngoc H.P."/>
            <person name="Redder P."/>
            <person name="Schenk M.E."/>
            <person name="Theriault C."/>
            <person name="Tolstrup N."/>
            <person name="Charlebois R.L."/>
            <person name="Doolittle W.F."/>
            <person name="Duguet M."/>
            <person name="Gaasterland T."/>
            <person name="Garrett R.A."/>
            <person name="Ragan M.A."/>
            <person name="Sensen C.W."/>
            <person name="Van der Oost J."/>
        </authorList>
    </citation>
    <scope>NUCLEOTIDE SEQUENCE [LARGE SCALE GENOMIC DNA]</scope>
    <source>
        <strain>ATCC 35092 / DSM 1617 / JCM 11322 / P2</strain>
    </source>
</reference>
<feature type="chain" id="PRO_0000131857" description="Large ribosomal subunit protein eL34">
    <location>
        <begin position="1"/>
        <end position="88"/>
    </location>
</feature>